<proteinExistence type="evidence at protein level"/>
<reference key="1">
    <citation type="journal article" date="1991" name="DNA Seq.">
        <title>Nucleotide sequence of murine PCNA: interspecies comparison of the cDNA and the 5' flanking region of the gene.</title>
        <authorList>
            <person name="Shipman-Appasamy P.M."/>
            <person name="Cohen K.S."/>
            <person name="Prystowsky M.B."/>
        </authorList>
    </citation>
    <scope>NUCLEOTIDE SEQUENCE [MRNA]</scope>
    <source>
        <strain>C57BL/6J</strain>
        <tissue>Lymphoid tissue</tissue>
    </source>
</reference>
<reference key="2">
    <citation type="journal article" date="1991" name="Nucleic Acids Res.">
        <title>Molecular cloning and structural analysis of mouse gene and pseudogenes for proliferating cell nuclear antigen.</title>
        <authorList>
            <person name="Yamaguchi M."/>
            <person name="Hayashi Y."/>
            <person name="Hirose F."/>
            <person name="Matsuoka S."/>
            <person name="Moriuchi T."/>
            <person name="Shiroishi T."/>
            <person name="Moriwaki K."/>
            <person name="Matsukage A."/>
        </authorList>
    </citation>
    <scope>NUCLEOTIDE SEQUENCE [GENOMIC DNA]</scope>
    <source>
        <strain>C57BL/6J</strain>
        <tissue>Spleen</tissue>
    </source>
</reference>
<reference key="3">
    <citation type="journal article" date="2004" name="Genome Res.">
        <title>The status, quality, and expansion of the NIH full-length cDNA project: the Mammalian Gene Collection (MGC).</title>
        <authorList>
            <consortium name="The MGC Project Team"/>
        </authorList>
    </citation>
    <scope>NUCLEOTIDE SEQUENCE [LARGE SCALE MRNA]</scope>
    <source>
        <strain>FVB/N</strain>
        <tissue>Mammary gland</tissue>
    </source>
</reference>
<reference key="4">
    <citation type="journal article" date="1988" name="J. Cell. Biochem.">
        <title>Cyclin mRNA and protein expression in recombinant interleukin 2-stimulated cloned murine T lymphocytes.</title>
        <authorList>
            <person name="Shipman P.M."/>
            <person name="Sabath D.E."/>
            <person name="Fischer A.H."/>
            <person name="Comber P.G."/>
            <person name="Sullivan K."/>
            <person name="Tan E.M."/>
            <person name="Prystowsky M.B."/>
        </authorList>
    </citation>
    <scope>NUCLEOTIDE SEQUENCE [MRNA] OF 3-42</scope>
    <source>
        <tissue>T-cell</tissue>
    </source>
</reference>
<reference key="5">
    <citation type="journal article" date="1997" name="J. Virol.">
        <title>The herpes simplex virus virulence factor ICP34.5 and the cellular protein MyD116 complex with proliferating cell nuclear antigen through the 63-amino-acid domain conserved in ICP34.5, MyD116, and GADD34.</title>
        <authorList>
            <person name="Brown S.M."/>
            <person name="MacLean A.R."/>
            <person name="McKie E.A."/>
            <person name="Harland J."/>
        </authorList>
    </citation>
    <scope>INTERACTION WITH PPP1R15A AND HHV-1 ICP34.5</scope>
</reference>
<reference key="6">
    <citation type="journal article" date="2003" name="Genomics">
        <title>Characterization of the genomic structure and expression of the mouse Apex2 gene.</title>
        <authorList>
            <person name="Ide Y."/>
            <person name="Tsuchimoto D."/>
            <person name="Tominaga Y."/>
            <person name="Iwamoto Y."/>
            <person name="Nakabeppu Y."/>
        </authorList>
    </citation>
    <scope>INTERACTION WITH APEX2</scope>
</reference>
<reference key="7">
    <citation type="journal article" date="2006" name="Nat. Cell Biol.">
        <title>Tyrosine phosphorylation controls PCNA function through protein stability.</title>
        <authorList>
            <person name="Wang S.C."/>
            <person name="Nakajima Y."/>
            <person name="Yu Y.L."/>
            <person name="Xia W."/>
            <person name="Chen C.T."/>
            <person name="Yang C.C."/>
            <person name="McIntush E.W."/>
            <person name="Li L.Y."/>
            <person name="Hawke D.H."/>
            <person name="Kobayashi R."/>
            <person name="Hung M.C."/>
        </authorList>
    </citation>
    <scope>PHOSPHORYLATION AT TYR-211</scope>
</reference>
<reference key="8">
    <citation type="journal article" date="2010" name="Cell">
        <title>A tissue-specific atlas of mouse protein phosphorylation and expression.</title>
        <authorList>
            <person name="Huttlin E.L."/>
            <person name="Jedrychowski M.P."/>
            <person name="Elias J.E."/>
            <person name="Goswami T."/>
            <person name="Rad R."/>
            <person name="Beausoleil S.A."/>
            <person name="Villen J."/>
            <person name="Haas W."/>
            <person name="Sowa M.E."/>
            <person name="Gygi S.P."/>
        </authorList>
    </citation>
    <scope>IDENTIFICATION BY MASS SPECTROMETRY [LARGE SCALE ANALYSIS]</scope>
    <source>
        <tissue>Heart</tissue>
        <tissue>Liver</tissue>
        <tissue>Lung</tissue>
        <tissue>Spleen</tissue>
        <tissue>Testis</tissue>
    </source>
</reference>
<reference key="9">
    <citation type="journal article" date="2013" name="Science">
        <title>RTEL1 is a replisome-associated helicase that promotes telomere and genome-wide replication.</title>
        <authorList>
            <person name="Vannier J.B."/>
            <person name="Sandhu S."/>
            <person name="Petalcorin M.I."/>
            <person name="Wu X."/>
            <person name="Nabi Z."/>
            <person name="Ding H."/>
            <person name="Boulton S.J."/>
        </authorList>
    </citation>
    <scope>INTERACTION WITH RTEL1</scope>
    <scope>SUBCELLULAR LOCATION</scope>
</reference>
<evidence type="ECO:0000250" key="1">
    <source>
        <dbReference type="UniProtKB" id="P04961"/>
    </source>
</evidence>
<evidence type="ECO:0000250" key="2">
    <source>
        <dbReference type="UniProtKB" id="P12004"/>
    </source>
</evidence>
<evidence type="ECO:0000255" key="3"/>
<evidence type="ECO:0000269" key="4">
    <source>
    </source>
</evidence>
<evidence type="ECO:0000269" key="5">
    <source>
    </source>
</evidence>
<evidence type="ECO:0000269" key="6">
    <source>
    </source>
</evidence>
<evidence type="ECO:0000269" key="7">
    <source>
    </source>
</evidence>
<evidence type="ECO:0000305" key="8"/>
<accession>P17918</accession>
<sequence>MFEARLIQGSILKKVLEALKDLINEACWDVSSGGVNLQSMDSSHVSLVQLTLRSEGFDTYRCDRNLAMGVNLTSMSKILKCAGNEDIITLRAEDNADTLALVFEAPNQEKVSDYEMKLMDLDVEQLGIPEQEYSCVIKMPSGEFARICRDLSHIGDAVVISCAKNGVKFSASGELGNGNIKLSQTSNVDKEEEAVTIEMNEPVHLTFALRYLNFFTKATPLSPTVTLSMSADVPLVVEYKIADMGHLKYYLAPKIEDEEAS</sequence>
<organism>
    <name type="scientific">Mus musculus</name>
    <name type="common">Mouse</name>
    <dbReference type="NCBI Taxonomy" id="10090"/>
    <lineage>
        <taxon>Eukaryota</taxon>
        <taxon>Metazoa</taxon>
        <taxon>Chordata</taxon>
        <taxon>Craniata</taxon>
        <taxon>Vertebrata</taxon>
        <taxon>Euteleostomi</taxon>
        <taxon>Mammalia</taxon>
        <taxon>Eutheria</taxon>
        <taxon>Euarchontoglires</taxon>
        <taxon>Glires</taxon>
        <taxon>Rodentia</taxon>
        <taxon>Myomorpha</taxon>
        <taxon>Muroidea</taxon>
        <taxon>Muridae</taxon>
        <taxon>Murinae</taxon>
        <taxon>Mus</taxon>
        <taxon>Mus</taxon>
    </lineage>
</organism>
<protein>
    <recommendedName>
        <fullName>Proliferating cell nuclear antigen</fullName>
        <shortName>PCNA</shortName>
    </recommendedName>
    <alternativeName>
        <fullName>Cyclin</fullName>
    </alternativeName>
</protein>
<keyword id="KW-0007">Acetylation</keyword>
<keyword id="KW-1015">Disulfide bond</keyword>
<keyword id="KW-0227">DNA damage</keyword>
<keyword id="KW-0234">DNA repair</keyword>
<keyword id="KW-0235">DNA replication</keyword>
<keyword id="KW-0238">DNA-binding</keyword>
<keyword id="KW-1017">Isopeptide bond</keyword>
<keyword id="KW-0488">Methylation</keyword>
<keyword id="KW-0539">Nucleus</keyword>
<keyword id="KW-0597">Phosphoprotein</keyword>
<keyword id="KW-1185">Reference proteome</keyword>
<keyword id="KW-0832">Ubl conjugation</keyword>
<comment type="function">
    <text evidence="2">Auxiliary protein of DNA polymerase delta and epsilon, is involved in the control of eukaryotic DNA replication by increasing the polymerase's processibility during elongation of the leading strand. Induces a robust stimulatory effect on the 3'-5' exonuclease and 3'-phosphodiesterase, but not apurinic-apyrimidinic (AP) endonuclease, APEX2 activities. Has to be loaded onto DNA in order to be able to stimulate APEX2. Plays a key role in DNA damage response (DDR) by being conveniently positioned at the replication fork to coordinate DNA replication with DNA repair and DNA damage tolerance pathways. Acts as a loading platform to recruit DDR proteins that allow completion of DNA replication after DNA damage and promote postreplication repair: Monoubiquitinated PCNA leads to recruitment of translesion (TLS) polymerases, while 'Lys-63'-linked polyubiquitination of PCNA is involved in error-free pathway and employs recombination mechanisms to synthesize across the lesion (By similarity).</text>
</comment>
<comment type="subunit">
    <text evidence="1 2 4 6 7">Homotrimer. Interacts with p300/EP300; the interaction occurs on chromatin in UV-irradiated damaged cells. Interacts with CREBBP (via transactivation domain and C-terminus); the interaction occurs on chromatin in UV-irradiated damaged cells. Directly interacts with POLD1, POLD3 and POLD4 subunits of the DNA polymerase delta complex, POLD3 being the major interacting partner; the interaction with POLD3 is inhibited by CDKN1A/p21(CIP1). Forms a complex with activator 1 heteropentamer in the presence of ATP. Interacts with EXO1, POLH, POLK, DNMT1, ERCC5, FEN1, CDC6 and POLDIP2 (By similarity). Interacts with POLB (By similarity). Interacts with APEX2; this interaction is triggered by reactive oxygen species and increased by misincorporation of uracil in nuclear DNA (PubMed:12573260). Forms a ternary complex with DNTTIP2 and core histone (By similarity). Interacts with KCTD10 (By similarity). Interacts with PPP1R15A (PubMed:9371605). Interacts with SMARCA5/SNF2H (By similarity). Interacts with BAZ1B/WSTF; the interaction is direct and is required for BAZ1B/WSTF binding to replication foci during S phase (By similarity). Interacts with HLTF and SHPRH. Interacts with NUDT15; this interaction is disrupted in response to UV irradiation and acetylation. Interacts with CDKN1A/p21(CIP1) and CDT1; interacts via their PIP-box which also recruits the DCX(DTL) complex. The interaction with CDKN1A inhibits POLD3 binding. Interacts with DDX11. Interacts with EGFR; positively regulates PCNA. Interacts with PARPBP. Interacts (when ubiquitinated) with SPRTN; leading to enhance RAD18-mediated PCNA ubiquitination. Interacts (when polyubiquitinated) with ZRANB3. Interacts with SMARCAD1. Interacts with CDKN1C. Interacts with PCLAF (via PIP-box) (By similarity). Interacts with RTEL1 (via PIP-box); the interaction is direct and essential for the suppression of telomere fragility (PubMed:24115439). Interacts with FAM111A (via PIP-box); the interaction is direct and required for PCNA loading on chromatin binding. Interacts with LIG1. Interacts with SETMAR. Interacts with ANKRD17. Interacts with FBXO18/FBH1 (via PIP-box); the interaction recruits the DCX(DTL) complex and promotes ubiquitination and degradation of FBXO18/FBH1. Interacts with POLN (By similarity). Interacts with SDE2 (via PIP-box); the interaction is direct and prevents ultraviolet light induced monoubiquitination (By similarity). Component of the replisome complex composed of at least DONSON, MCM2, MCM7, PCNA and TICRR; interaction at least with PCNA occurs during DNA replication (By similarity). Interacts with MAPK15; the interaction is chromatin binding dependent and prevents MDM2-mediated PCNA destruction by inhibiting the association of PCNA with MDM2. Interacts with PARP10 (via PIP-box) (By similarity). Interacts with DDI2 (By similarity). Interacts with HMCES (via PIP-box) (By similarity). Interacts with TRAIP (via PIP-box) (By similarity). Interacts with UHRF2 (By similarity). Interacts with ALKBH2; this interaction is enhanced during the S-phase of the cell cycle. Interacts with ATAD5; the interaction promotes USP1-mediated PCNA deubiquitination (By similarity). Interacts (when phosphorylated) with GRB2 (By similarity). Interacts with ANG (By similarity). Interacts with nuclear UNG; this interaction mediates UNG recruitment to S-phase replication foci. Interacts with ERCC6L2 (via an atypical PIP-box); this interaction facilitates cenrtomeric localization of ERCC6L2 (By similarity).</text>
</comment>
<comment type="interaction">
    <interactant intactId="EBI-1173716">
        <id>P17918</id>
    </interactant>
    <interactant intactId="EBI-1174103">
        <id>P39689</id>
        <label>Cdkn1a</label>
    </interactant>
    <organismsDiffer>false</organismsDiffer>
    <experiments>2</experiments>
</comment>
<comment type="interaction">
    <interactant intactId="EBI-1173716">
        <id>P17918</id>
    </interactant>
    <interactant intactId="EBI-1173616">
        <id>Q9Z111</id>
        <label>Gadd45g</label>
    </interactant>
    <organismsDiffer>false</organismsDiffer>
    <experiments>2</experiments>
</comment>
<comment type="interaction">
    <interactant intactId="EBI-1173716">
        <id>P17918</id>
    </interactant>
    <interactant intactId="EBI-357187">
        <id>P62137</id>
        <label>Ppp1ca</label>
    </interactant>
    <organismsDiffer>false</organismsDiffer>
    <experiments>2</experiments>
</comment>
<comment type="interaction">
    <interactant intactId="EBI-1173716">
        <id>P17918</id>
    </interactant>
    <interactant intactId="EBI-346909">
        <id>Q62318</id>
        <label>Trim28</label>
    </interactant>
    <organismsDiffer>false</organismsDiffer>
    <experiments>2</experiments>
</comment>
<comment type="subcellular location">
    <subcellularLocation>
        <location evidence="6">Nucleus</location>
    </subcellularLocation>
    <text evidence="2">Colocalizes with CREBBP, EP300 and POLD1 to sites of DNA damage (By similarity). Forms nuclear foci representing sites of ongoing DNA replication and vary in morphology and number during S phase. Together with APEX2, is redistributed in discrete nuclear foci in presence of oxidative DNA damaging agents.</text>
</comment>
<comment type="induction">
    <text>Induced in IL2-stimulated proliferating T-lymphocytes.</text>
</comment>
<comment type="PTM">
    <text evidence="2">Phosphorylated. Phosphorylation at Tyr-211 by EGFR stabilizes chromatin-associated PCNA (By similarity).</text>
</comment>
<comment type="PTM">
    <text evidence="2">Acetylated by CREBBP and p300/EP300; preferentially acetylated by CREBBP on Lys-80, Lys-13 and Lys-14 and on Lys-77 by p300/EP300 upon loading on chromatin in response to UV irradiation. Lysine acetylation disrupts association with chromatin, hence promoting PCNA ubiquitination and proteasomal degradation in response to UV damage in a CREBBP- and EP300-dependent manner. Acetylation disrupts interaction with NUDT15 and promotes degradation (By similarity).</text>
</comment>
<comment type="PTM">
    <text evidence="2">Ubiquitinated. Following DNA damage, can be either monoubiquitinated to stimulate direct bypass of DNA lesions by specialized DNA polymerases or polyubiquitinated to promote recombination-dependent DNA synthesis across DNA lesions by template switching mechanisms. Following induction of replication stress, monoubiquitinated by the UBE2B-RAD18 complex on Lys-164, leading to recruit translesion (TLS) polymerases, which are able to synthesize across DNA lesions in a potentially error-prone manner. An error-free pathway also exists and requires non-canonical polyubiquitination on Lys-164 through 'Lys-63' linkage of ubiquitin moieties by the E2 complex UBE2N-UBE2V2 and the E3 ligases, HLTF, RNF8 and SHPRH. This error-free pathway, also known as template switching, employs recombination mechanisms to synthesize across the lesion, using as a template the undamaged, newly synthesized strand of the sister chromatid. Monoubiquitination at Lys-164 also takes place in undamaged proliferating cells, and is mediated by the DCX(DTL) complex, leading to enhance PCNA-dependent translesion DNA synthesis. Sumoylated during S phase (By similarity).</text>
</comment>
<comment type="PTM">
    <text evidence="2">Methylated on glutamate residues by ARMT1.</text>
</comment>
<comment type="similarity">
    <text evidence="8">Belongs to the PCNA family.</text>
</comment>
<name>PCNA_MOUSE</name>
<gene>
    <name type="primary">Pcna</name>
</gene>
<feature type="chain" id="PRO_0000149160" description="Proliferating cell nuclear antigen">
    <location>
        <begin position="1"/>
        <end position="261"/>
    </location>
</feature>
<feature type="DNA-binding region" evidence="3">
    <location>
        <begin position="61"/>
        <end position="80"/>
    </location>
</feature>
<feature type="modified residue" description="N6-acetyllysine" evidence="2">
    <location>
        <position position="14"/>
    </location>
</feature>
<feature type="modified residue" description="N6-acetyllysine" evidence="2">
    <location>
        <position position="77"/>
    </location>
</feature>
<feature type="modified residue" description="N6-acetyllysine" evidence="2">
    <location>
        <position position="80"/>
    </location>
</feature>
<feature type="modified residue" description="Phosphotyrosine; by EGFR" evidence="5">
    <location>
        <position position="211"/>
    </location>
</feature>
<feature type="modified residue" description="N6-acetyllysine" evidence="2">
    <location>
        <position position="248"/>
    </location>
</feature>
<feature type="disulfide bond" evidence="2">
    <location>
        <begin position="135"/>
        <end position="162"/>
    </location>
</feature>
<feature type="cross-link" description="Glycyl lysine isopeptide (Lys-Gly) (interchain with G-Cter in SUMO2); alternate" evidence="2">
    <location>
        <position position="164"/>
    </location>
</feature>
<feature type="cross-link" description="Glycyl lysine isopeptide (Lys-Gly) (interchain with G-Cter in ubiquitin); alternate" evidence="2">
    <location>
        <position position="164"/>
    </location>
</feature>
<feature type="cross-link" description="Glycyl lysine isopeptide (Lys-Gly) (interchain with G-Cter in SUMO2)" evidence="2">
    <location>
        <position position="254"/>
    </location>
</feature>
<feature type="sequence conflict" description="In Ref. 4; no nucleotide entry." evidence="8" ref="4">
    <original>EAR</original>
    <variation>LES</variation>
    <location>
        <begin position="3"/>
        <end position="5"/>
    </location>
</feature>
<feature type="sequence conflict" description="In Ref. 2; CAA37243." evidence="8" ref="2">
    <original>A</original>
    <variation>T</variation>
    <location>
        <position position="67"/>
    </location>
</feature>
<dbReference type="EMBL" id="X53068">
    <property type="protein sequence ID" value="CAA37243.1"/>
    <property type="molecule type" value="mRNA"/>
</dbReference>
<dbReference type="EMBL" id="X57800">
    <property type="protein sequence ID" value="CAA40938.1"/>
    <property type="molecule type" value="Genomic_DNA"/>
</dbReference>
<dbReference type="EMBL" id="BC005778">
    <property type="protein sequence ID" value="AAH05778.1"/>
    <property type="molecule type" value="mRNA"/>
</dbReference>
<dbReference type="EMBL" id="BC010343">
    <property type="protein sequence ID" value="AAH10343.1"/>
    <property type="molecule type" value="mRNA"/>
</dbReference>
<dbReference type="CCDS" id="CCDS16771.1"/>
<dbReference type="PIR" id="S15703">
    <property type="entry name" value="WMMS"/>
</dbReference>
<dbReference type="RefSeq" id="NP_035175.1">
    <property type="nucleotide sequence ID" value="NM_011045.2"/>
</dbReference>
<dbReference type="BMRB" id="P17918"/>
<dbReference type="SMR" id="P17918"/>
<dbReference type="BioGRID" id="202049">
    <property type="interactions" value="70"/>
</dbReference>
<dbReference type="ComplexPortal" id="CPX-541">
    <property type="entry name" value="PCNA homotrimer"/>
</dbReference>
<dbReference type="CORUM" id="P17918"/>
<dbReference type="DIP" id="DIP-39409N"/>
<dbReference type="FunCoup" id="P17918">
    <property type="interactions" value="3831"/>
</dbReference>
<dbReference type="IntAct" id="P17918">
    <property type="interactions" value="41"/>
</dbReference>
<dbReference type="MINT" id="P17918"/>
<dbReference type="STRING" id="10090.ENSMUSP00000028817"/>
<dbReference type="GlyGen" id="P17918">
    <property type="glycosylation" value="1 site"/>
</dbReference>
<dbReference type="iPTMnet" id="P17918"/>
<dbReference type="MetOSite" id="P17918"/>
<dbReference type="PhosphoSitePlus" id="P17918"/>
<dbReference type="SwissPalm" id="P17918"/>
<dbReference type="REPRODUCTION-2DPAGE" id="P17918"/>
<dbReference type="jPOST" id="P17918"/>
<dbReference type="PaxDb" id="10090-ENSMUSP00000028817"/>
<dbReference type="PeptideAtlas" id="P17918"/>
<dbReference type="ProteomicsDB" id="294031"/>
<dbReference type="Pumba" id="P17918"/>
<dbReference type="TopDownProteomics" id="P17918"/>
<dbReference type="Antibodypedia" id="3769">
    <property type="antibodies" value="2741 antibodies from 54 providers"/>
</dbReference>
<dbReference type="DNASU" id="18538"/>
<dbReference type="Ensembl" id="ENSMUST00000028817.7">
    <property type="protein sequence ID" value="ENSMUSP00000028817.7"/>
    <property type="gene ID" value="ENSMUSG00000027342.15"/>
</dbReference>
<dbReference type="GeneID" id="18538"/>
<dbReference type="KEGG" id="mmu:18538"/>
<dbReference type="UCSC" id="uc008mml.1">
    <property type="organism name" value="mouse"/>
</dbReference>
<dbReference type="AGR" id="MGI:97503"/>
<dbReference type="CTD" id="5111"/>
<dbReference type="MGI" id="MGI:97503">
    <property type="gene designation" value="Pcna"/>
</dbReference>
<dbReference type="VEuPathDB" id="HostDB:ENSMUSG00000027342"/>
<dbReference type="eggNOG" id="KOG1636">
    <property type="taxonomic scope" value="Eukaryota"/>
</dbReference>
<dbReference type="GeneTree" id="ENSGT00390000004965"/>
<dbReference type="HOGENOM" id="CLU_043978_3_0_1"/>
<dbReference type="InParanoid" id="P17918"/>
<dbReference type="OMA" id="EMKLINM"/>
<dbReference type="OrthoDB" id="534348at2759"/>
<dbReference type="PhylomeDB" id="P17918"/>
<dbReference type="TreeFam" id="TF313441"/>
<dbReference type="Reactome" id="R-MMU-110312">
    <property type="pathway name" value="Translesion synthesis by REV1"/>
</dbReference>
<dbReference type="Reactome" id="R-MMU-110314">
    <property type="pathway name" value="Recognition of DNA damage by PCNA-containing replication complex"/>
</dbReference>
<dbReference type="Reactome" id="R-MMU-110320">
    <property type="pathway name" value="Translesion Synthesis by POLH"/>
</dbReference>
<dbReference type="Reactome" id="R-MMU-174411">
    <property type="pathway name" value="Polymerase switching on the C-strand of the telomere"/>
</dbReference>
<dbReference type="Reactome" id="R-MMU-174414">
    <property type="pathway name" value="Processive synthesis on the C-strand of the telomere"/>
</dbReference>
<dbReference type="Reactome" id="R-MMU-174417">
    <property type="pathway name" value="Telomere C-strand (Lagging Strand) Synthesis"/>
</dbReference>
<dbReference type="Reactome" id="R-MMU-174437">
    <property type="pathway name" value="Removal of the Flap Intermediate from the C-strand"/>
</dbReference>
<dbReference type="Reactome" id="R-MMU-4615885">
    <property type="pathway name" value="SUMOylation of DNA replication proteins"/>
</dbReference>
<dbReference type="Reactome" id="R-MMU-5358565">
    <property type="pathway name" value="Mismatch repair (MMR) directed by MSH2:MSH6 (MutSalpha)"/>
</dbReference>
<dbReference type="Reactome" id="R-MMU-5651801">
    <property type="pathway name" value="PCNA-Dependent Long Patch Base Excision Repair"/>
</dbReference>
<dbReference type="Reactome" id="R-MMU-5655862">
    <property type="pathway name" value="Translesion synthesis by POLK"/>
</dbReference>
<dbReference type="Reactome" id="R-MMU-5656121">
    <property type="pathway name" value="Translesion synthesis by POLI"/>
</dbReference>
<dbReference type="Reactome" id="R-MMU-5656169">
    <property type="pathway name" value="Termination of translesion DNA synthesis"/>
</dbReference>
<dbReference type="Reactome" id="R-MMU-5685942">
    <property type="pathway name" value="HDR through Homologous Recombination (HRR)"/>
</dbReference>
<dbReference type="Reactome" id="R-MMU-5696397">
    <property type="pathway name" value="Gap-filling DNA repair synthesis and ligation in GG-NER"/>
</dbReference>
<dbReference type="Reactome" id="R-MMU-5696400">
    <property type="pathway name" value="Dual Incision in GG-NER"/>
</dbReference>
<dbReference type="Reactome" id="R-MMU-6782135">
    <property type="pathway name" value="Dual incision in TC-NER"/>
</dbReference>
<dbReference type="Reactome" id="R-MMU-6782210">
    <property type="pathway name" value="Gap-filling DNA repair synthesis and ligation in TC-NER"/>
</dbReference>
<dbReference type="Reactome" id="R-MMU-6804114">
    <property type="pathway name" value="TP53 Regulates Transcription of Genes Involved in G2 Cell Cycle Arrest"/>
</dbReference>
<dbReference type="Reactome" id="R-MMU-69091">
    <property type="pathway name" value="Polymerase switching"/>
</dbReference>
<dbReference type="Reactome" id="R-MMU-69166">
    <property type="pathway name" value="Removal of the Flap Intermediate"/>
</dbReference>
<dbReference type="Reactome" id="R-MMU-69183">
    <property type="pathway name" value="Processive synthesis on the lagging strand"/>
</dbReference>
<dbReference type="Reactome" id="R-MMU-8866654">
    <property type="pathway name" value="E3 ubiquitin ligases ubiquitinate target proteins"/>
</dbReference>
<dbReference type="BioGRID-ORCS" id="18538">
    <property type="hits" value="56 hits in 109 CRISPR screens"/>
</dbReference>
<dbReference type="ChiTaRS" id="Pcna">
    <property type="organism name" value="mouse"/>
</dbReference>
<dbReference type="PRO" id="PR:P17918"/>
<dbReference type="Proteomes" id="UP000000589">
    <property type="component" value="Chromosome 2"/>
</dbReference>
<dbReference type="RNAct" id="P17918">
    <property type="molecule type" value="protein"/>
</dbReference>
<dbReference type="Bgee" id="ENSMUSG00000027342">
    <property type="expression patterns" value="Expressed in thymus and 78 other cell types or tissues"/>
</dbReference>
<dbReference type="ExpressionAtlas" id="P17918">
    <property type="expression patterns" value="baseline and differential"/>
</dbReference>
<dbReference type="GO" id="GO:0005813">
    <property type="term" value="C:centrosome"/>
    <property type="evidence" value="ECO:0000266"/>
    <property type="project" value="MGI"/>
</dbReference>
<dbReference type="GO" id="GO:0000785">
    <property type="term" value="C:chromatin"/>
    <property type="evidence" value="ECO:0000250"/>
    <property type="project" value="UniProtKB"/>
</dbReference>
<dbReference type="GO" id="GO:0000307">
    <property type="term" value="C:cyclin-dependent protein kinase holoenzyme complex"/>
    <property type="evidence" value="ECO:0000353"/>
    <property type="project" value="MGI"/>
</dbReference>
<dbReference type="GO" id="GO:0001673">
    <property type="term" value="C:male germ cell nucleus"/>
    <property type="evidence" value="ECO:0000314"/>
    <property type="project" value="MGI"/>
</dbReference>
<dbReference type="GO" id="GO:0016604">
    <property type="term" value="C:nuclear body"/>
    <property type="evidence" value="ECO:0007669"/>
    <property type="project" value="Ensembl"/>
</dbReference>
<dbReference type="GO" id="GO:0005652">
    <property type="term" value="C:nuclear lamina"/>
    <property type="evidence" value="ECO:0000314"/>
    <property type="project" value="MGI"/>
</dbReference>
<dbReference type="GO" id="GO:0043596">
    <property type="term" value="C:nuclear replication fork"/>
    <property type="evidence" value="ECO:0007669"/>
    <property type="project" value="Ensembl"/>
</dbReference>
<dbReference type="GO" id="GO:0005634">
    <property type="term" value="C:nucleus"/>
    <property type="evidence" value="ECO:0000314"/>
    <property type="project" value="MGI"/>
</dbReference>
<dbReference type="GO" id="GO:0043626">
    <property type="term" value="C:PCNA complex"/>
    <property type="evidence" value="ECO:0000250"/>
    <property type="project" value="UniProtKB"/>
</dbReference>
<dbReference type="GO" id="GO:0070557">
    <property type="term" value="C:PCNA-p21 complex"/>
    <property type="evidence" value="ECO:0000250"/>
    <property type="project" value="UniProtKB"/>
</dbReference>
<dbReference type="GO" id="GO:0005657">
    <property type="term" value="C:replication fork"/>
    <property type="evidence" value="ECO:0000314"/>
    <property type="project" value="MGI"/>
</dbReference>
<dbReference type="GO" id="GO:0003682">
    <property type="term" value="F:chromatin binding"/>
    <property type="evidence" value="ECO:0000250"/>
    <property type="project" value="UniProtKB"/>
</dbReference>
<dbReference type="GO" id="GO:0003684">
    <property type="term" value="F:damaged DNA binding"/>
    <property type="evidence" value="ECO:0000250"/>
    <property type="project" value="UniProtKB"/>
</dbReference>
<dbReference type="GO" id="GO:0032139">
    <property type="term" value="F:dinucleotide insertion or deletion binding"/>
    <property type="evidence" value="ECO:0007669"/>
    <property type="project" value="Ensembl"/>
</dbReference>
<dbReference type="GO" id="GO:0070182">
    <property type="term" value="F:DNA polymerase binding"/>
    <property type="evidence" value="ECO:0007669"/>
    <property type="project" value="Ensembl"/>
</dbReference>
<dbReference type="GO" id="GO:0030337">
    <property type="term" value="F:DNA polymerase processivity factor activity"/>
    <property type="evidence" value="ECO:0007669"/>
    <property type="project" value="InterPro"/>
</dbReference>
<dbReference type="GO" id="GO:0019899">
    <property type="term" value="F:enzyme binding"/>
    <property type="evidence" value="ECO:0000353"/>
    <property type="project" value="BHF-UCL"/>
</dbReference>
<dbReference type="GO" id="GO:0035035">
    <property type="term" value="F:histone acetyltransferase binding"/>
    <property type="evidence" value="ECO:0007669"/>
    <property type="project" value="Ensembl"/>
</dbReference>
<dbReference type="GO" id="GO:0042802">
    <property type="term" value="F:identical protein binding"/>
    <property type="evidence" value="ECO:0007669"/>
    <property type="project" value="Ensembl"/>
</dbReference>
<dbReference type="GO" id="GO:0032405">
    <property type="term" value="F:MutLalpha complex binding"/>
    <property type="evidence" value="ECO:0007669"/>
    <property type="project" value="Ensembl"/>
</dbReference>
<dbReference type="GO" id="GO:0030331">
    <property type="term" value="F:nuclear estrogen receptor binding"/>
    <property type="evidence" value="ECO:0007669"/>
    <property type="project" value="Ensembl"/>
</dbReference>
<dbReference type="GO" id="GO:0000701">
    <property type="term" value="F:purine-specific mismatch base pair DNA N-glycosylase activity"/>
    <property type="evidence" value="ECO:0007669"/>
    <property type="project" value="Ensembl"/>
</dbReference>
<dbReference type="GO" id="GO:0030971">
    <property type="term" value="F:receptor tyrosine kinase binding"/>
    <property type="evidence" value="ECO:0007669"/>
    <property type="project" value="Ensembl"/>
</dbReference>
<dbReference type="GO" id="GO:0006287">
    <property type="term" value="P:base-excision repair, gap-filling"/>
    <property type="evidence" value="ECO:0000314"/>
    <property type="project" value="MGI"/>
</dbReference>
<dbReference type="GO" id="GO:0070301">
    <property type="term" value="P:cellular response to hydrogen peroxide"/>
    <property type="evidence" value="ECO:0007669"/>
    <property type="project" value="Ensembl"/>
</dbReference>
<dbReference type="GO" id="GO:0034644">
    <property type="term" value="P:cellular response to UV"/>
    <property type="evidence" value="ECO:0000250"/>
    <property type="project" value="UniProtKB"/>
</dbReference>
<dbReference type="GO" id="GO:0071466">
    <property type="term" value="P:cellular response to xenobiotic stimulus"/>
    <property type="evidence" value="ECO:0000314"/>
    <property type="project" value="MGI"/>
</dbReference>
<dbReference type="GO" id="GO:0030855">
    <property type="term" value="P:epithelial cell differentiation"/>
    <property type="evidence" value="ECO:0007669"/>
    <property type="project" value="Ensembl"/>
</dbReference>
<dbReference type="GO" id="GO:0044849">
    <property type="term" value="P:estrous cycle"/>
    <property type="evidence" value="ECO:0007669"/>
    <property type="project" value="Ensembl"/>
</dbReference>
<dbReference type="GO" id="GO:0007507">
    <property type="term" value="P:heart development"/>
    <property type="evidence" value="ECO:0007669"/>
    <property type="project" value="Ensembl"/>
</dbReference>
<dbReference type="GO" id="GO:0097421">
    <property type="term" value="P:liver regeneration"/>
    <property type="evidence" value="ECO:0007669"/>
    <property type="project" value="Ensembl"/>
</dbReference>
<dbReference type="GO" id="GO:0006298">
    <property type="term" value="P:mismatch repair"/>
    <property type="evidence" value="ECO:0007669"/>
    <property type="project" value="Ensembl"/>
</dbReference>
<dbReference type="GO" id="GO:1902990">
    <property type="term" value="P:mitotic telomere maintenance via semi-conservative replication"/>
    <property type="evidence" value="ECO:0000316"/>
    <property type="project" value="BHF-UCL"/>
</dbReference>
<dbReference type="GO" id="GO:0000122">
    <property type="term" value="P:negative regulation of transcription by RNA polymerase II"/>
    <property type="evidence" value="ECO:0000314"/>
    <property type="project" value="MGI"/>
</dbReference>
<dbReference type="GO" id="GO:0032077">
    <property type="term" value="P:positive regulation of deoxyribonuclease activity"/>
    <property type="evidence" value="ECO:0000250"/>
    <property type="project" value="UniProtKB"/>
</dbReference>
<dbReference type="GO" id="GO:0045739">
    <property type="term" value="P:positive regulation of DNA repair"/>
    <property type="evidence" value="ECO:0000250"/>
    <property type="project" value="UniProtKB"/>
</dbReference>
<dbReference type="GO" id="GO:0045740">
    <property type="term" value="P:positive regulation of DNA replication"/>
    <property type="evidence" value="ECO:0000250"/>
    <property type="project" value="UniProtKB"/>
</dbReference>
<dbReference type="GO" id="GO:0031297">
    <property type="term" value="P:replication fork processing"/>
    <property type="evidence" value="ECO:0000316"/>
    <property type="project" value="BHF-UCL"/>
</dbReference>
<dbReference type="GO" id="GO:0046686">
    <property type="term" value="P:response to cadmium ion"/>
    <property type="evidence" value="ECO:0007669"/>
    <property type="project" value="Ensembl"/>
</dbReference>
<dbReference type="GO" id="GO:0071548">
    <property type="term" value="P:response to dexamethasone"/>
    <property type="evidence" value="ECO:0007669"/>
    <property type="project" value="Ensembl"/>
</dbReference>
<dbReference type="GO" id="GO:0032355">
    <property type="term" value="P:response to estradiol"/>
    <property type="evidence" value="ECO:0007669"/>
    <property type="project" value="Ensembl"/>
</dbReference>
<dbReference type="GO" id="GO:1902065">
    <property type="term" value="P:response to L-glutamate"/>
    <property type="evidence" value="ECO:0007669"/>
    <property type="project" value="Ensembl"/>
</dbReference>
<dbReference type="GO" id="GO:0019985">
    <property type="term" value="P:translesion synthesis"/>
    <property type="evidence" value="ECO:0000250"/>
    <property type="project" value="UniProtKB"/>
</dbReference>
<dbReference type="CDD" id="cd00577">
    <property type="entry name" value="PCNA"/>
    <property type="match status" value="1"/>
</dbReference>
<dbReference type="FunFam" id="3.10.150.10:FF:000006">
    <property type="entry name" value="Proliferating cell nuclear antigen"/>
    <property type="match status" value="1"/>
</dbReference>
<dbReference type="FunFam" id="3.10.150.10:FF:000008">
    <property type="entry name" value="Proliferating cell nuclear antigen"/>
    <property type="match status" value="1"/>
</dbReference>
<dbReference type="FunFam" id="3.70.10.10:FF:000001">
    <property type="entry name" value="Proliferating cell nuclear antigen"/>
    <property type="match status" value="1"/>
</dbReference>
<dbReference type="Gene3D" id="3.70.10.10">
    <property type="match status" value="1"/>
</dbReference>
<dbReference type="HAMAP" id="MF_00317">
    <property type="entry name" value="DNApol_clamp_arch"/>
    <property type="match status" value="1"/>
</dbReference>
<dbReference type="InterPro" id="IPR046938">
    <property type="entry name" value="DNA_clamp_sf"/>
</dbReference>
<dbReference type="InterPro" id="IPR000730">
    <property type="entry name" value="Pr_cel_nuc_antig"/>
</dbReference>
<dbReference type="InterPro" id="IPR022649">
    <property type="entry name" value="Pr_cel_nuc_antig_C"/>
</dbReference>
<dbReference type="InterPro" id="IPR022659">
    <property type="entry name" value="Pr_cel_nuc_antig_CS"/>
</dbReference>
<dbReference type="InterPro" id="IPR022648">
    <property type="entry name" value="Pr_cel_nuc_antig_N"/>
</dbReference>
<dbReference type="NCBIfam" id="TIGR00590">
    <property type="entry name" value="pcna"/>
    <property type="match status" value="1"/>
</dbReference>
<dbReference type="PANTHER" id="PTHR11352">
    <property type="entry name" value="PROLIFERATING CELL NUCLEAR ANTIGEN"/>
    <property type="match status" value="1"/>
</dbReference>
<dbReference type="PANTHER" id="PTHR11352:SF0">
    <property type="entry name" value="PROLIFERATING CELL NUCLEAR ANTIGEN"/>
    <property type="match status" value="1"/>
</dbReference>
<dbReference type="Pfam" id="PF02747">
    <property type="entry name" value="PCNA_C"/>
    <property type="match status" value="1"/>
</dbReference>
<dbReference type="Pfam" id="PF00705">
    <property type="entry name" value="PCNA_N"/>
    <property type="match status" value="1"/>
</dbReference>
<dbReference type="PRINTS" id="PR00339">
    <property type="entry name" value="PCNACYCLIN"/>
</dbReference>
<dbReference type="SUPFAM" id="SSF55979">
    <property type="entry name" value="DNA clamp"/>
    <property type="match status" value="2"/>
</dbReference>
<dbReference type="PROSITE" id="PS01251">
    <property type="entry name" value="PCNA_1"/>
    <property type="match status" value="1"/>
</dbReference>
<dbReference type="PROSITE" id="PS00293">
    <property type="entry name" value="PCNA_2"/>
    <property type="match status" value="1"/>
</dbReference>